<reference key="1">
    <citation type="journal article" date="2013" name="Nat. Commun.">
        <title>The genome of Mesobuthus martensii reveals a unique adaptation model of arthropods.</title>
        <authorList>
            <person name="Cao Z."/>
            <person name="Yu Y."/>
            <person name="Wu Y."/>
            <person name="Hao P."/>
            <person name="Di Z."/>
            <person name="He Y."/>
            <person name="Chen Z."/>
            <person name="Yang W."/>
            <person name="Shen Z."/>
            <person name="He X."/>
            <person name="Sheng J."/>
            <person name="Xu X."/>
            <person name="Pan B."/>
            <person name="Feng J."/>
            <person name="Yang X."/>
            <person name="Hong W."/>
            <person name="Zhao W."/>
            <person name="Li Z."/>
            <person name="Huang K."/>
            <person name="Li T."/>
            <person name="Kong Y."/>
            <person name="Liu H."/>
            <person name="Jiang D."/>
            <person name="Zhang B."/>
            <person name="Hu J."/>
            <person name="Hu Y."/>
            <person name="Wang B."/>
            <person name="Dai J."/>
            <person name="Yuan B."/>
            <person name="Feng Y."/>
            <person name="Huang W."/>
            <person name="Xing X."/>
            <person name="Zhao G."/>
            <person name="Li X."/>
            <person name="Li Y."/>
            <person name="Li W."/>
        </authorList>
    </citation>
    <scope>NUCLEOTIDE SEQUENCE [LARGE SCALE GENOMIC DNA]</scope>
    <source>
        <tissue>Muscle</tissue>
    </source>
</reference>
<reference key="2">
    <citation type="journal article" date="2020" name="Int. J. Biol. Macromol.">
        <title>Ion channel modulation by scorpion hemolymph and its defensin ingredients highlights origin of neurotoxins in telson formed in Paleozoic scorpions.</title>
        <authorList>
            <person name="Meng L."/>
            <person name="Zhao Y."/>
            <person name="Qu D."/>
            <person name="Xie Z."/>
            <person name="Guo X."/>
            <person name="Zhu Z."/>
            <person name="Chen Z."/>
            <person name="Zhang L."/>
            <person name="Li W."/>
            <person name="Cao Z."/>
            <person name="Tian C."/>
            <person name="Wu Y."/>
        </authorList>
    </citation>
    <scope>FUNCTION</scope>
    <scope>SYNTHESIS OF 25-62</scope>
    <scope>TISSUE SPECIFICITY</scope>
    <scope>SUBCELLULAR LOCATION</scope>
    <source>
        <tissue>Hemolymph</tissue>
        <tissue>Venom gland</tissue>
    </source>
</reference>
<proteinExistence type="evidence at transcript level"/>
<comment type="function">
    <text evidence="1 4">Antibacterial peptide active against Gram-positive bacteria (including S.aureus ATCC25923 (MIC=2.5 uM), M.luteus AB93113 (MIC=2.5 uM), and the antibiotic-resistant S.epidermidis PRSE P1389 (MIC=1.25 uM)), but not against Gram-negative bacteria (including E.coli and P.aeruginosa). Also has weak blocking activity on Kv1.1/KCNA1 (8.7% inhibition), Kv1.2/KCNA2 (10.2% inhibition), Kv1.3/KCNA3 (9.0% inhibition), KCa3.1/KCNN4/IK (9.1% inhibition), KCa2.3/KCNN3/SK3 (46.3% inhibition) and Kv11.1/KCNH2/ERG1 (16.9% inhibition) channels (tested at 1 uM) (PubMed:31954123). It inhibits potassium channel current by interacting with the pore region (By similarity).</text>
</comment>
<comment type="subcellular location">
    <subcellularLocation>
        <location evidence="4">Secreted</location>
    </subcellularLocation>
</comment>
<comment type="tissue specificity">
    <text evidence="4">Highly expressed in non-venom gland (hemolymph) and moderately expressed in venom gland.</text>
</comment>
<comment type="similarity">
    <text evidence="3">Belongs to the invertebrate defensin family. Type 2 subfamily.</text>
</comment>
<feature type="signal peptide" evidence="2">
    <location>
        <begin position="1"/>
        <end position="24"/>
    </location>
</feature>
<feature type="chain" id="PRO_0000455529" description="Defensin BmKDfsin5" evidence="7">
    <location>
        <begin position="25"/>
        <end position="62"/>
    </location>
</feature>
<feature type="disulfide bond" evidence="1">
    <location>
        <begin position="28"/>
        <end position="49"/>
    </location>
</feature>
<feature type="disulfide bond" evidence="1">
    <location>
        <begin position="35"/>
        <end position="57"/>
    </location>
</feature>
<feature type="disulfide bond" evidence="1">
    <location>
        <begin position="39"/>
        <end position="59"/>
    </location>
</feature>
<dbReference type="SMR" id="P0DQU0"/>
<dbReference type="GO" id="GO:0005576">
    <property type="term" value="C:extracellular region"/>
    <property type="evidence" value="ECO:0007669"/>
    <property type="project" value="UniProtKB-SubCell"/>
</dbReference>
<dbReference type="GO" id="GO:0015459">
    <property type="term" value="F:potassium channel regulator activity"/>
    <property type="evidence" value="ECO:0007669"/>
    <property type="project" value="UniProtKB-KW"/>
</dbReference>
<dbReference type="GO" id="GO:0090729">
    <property type="term" value="F:toxin activity"/>
    <property type="evidence" value="ECO:0007669"/>
    <property type="project" value="UniProtKB-KW"/>
</dbReference>
<dbReference type="GO" id="GO:0042742">
    <property type="term" value="P:defense response to bacterium"/>
    <property type="evidence" value="ECO:0007669"/>
    <property type="project" value="UniProtKB-KW"/>
</dbReference>
<dbReference type="GO" id="GO:0045087">
    <property type="term" value="P:innate immune response"/>
    <property type="evidence" value="ECO:0007669"/>
    <property type="project" value="UniProtKB-KW"/>
</dbReference>
<dbReference type="FunFam" id="3.30.30.10:FF:000006">
    <property type="entry name" value="Defensin DFS2"/>
    <property type="match status" value="1"/>
</dbReference>
<dbReference type="Gene3D" id="3.30.30.10">
    <property type="entry name" value="Knottin, scorpion toxin-like"/>
    <property type="match status" value="1"/>
</dbReference>
<dbReference type="InterPro" id="IPR001542">
    <property type="entry name" value="Defensin_invertebrate/fungal"/>
</dbReference>
<dbReference type="InterPro" id="IPR036574">
    <property type="entry name" value="Scorpion_toxin-like_sf"/>
</dbReference>
<dbReference type="Pfam" id="PF01097">
    <property type="entry name" value="Defensin_2"/>
    <property type="match status" value="1"/>
</dbReference>
<dbReference type="SUPFAM" id="SSF57095">
    <property type="entry name" value="Scorpion toxin-like"/>
    <property type="match status" value="1"/>
</dbReference>
<dbReference type="PROSITE" id="PS51378">
    <property type="entry name" value="INVERT_DEFENSINS"/>
    <property type="match status" value="1"/>
</dbReference>
<evidence type="ECO:0000250" key="1">
    <source>
        <dbReference type="UniProtKB" id="A0A384E0Y8"/>
    </source>
</evidence>
<evidence type="ECO:0000255" key="2"/>
<evidence type="ECO:0000255" key="3">
    <source>
        <dbReference type="PROSITE-ProRule" id="PRU00710"/>
    </source>
</evidence>
<evidence type="ECO:0000269" key="4">
    <source>
    </source>
</evidence>
<evidence type="ECO:0000303" key="5">
    <source>
    </source>
</evidence>
<evidence type="ECO:0000303" key="6">
    <source>
    </source>
</evidence>
<evidence type="ECO:0000305" key="7">
    <source>
    </source>
</evidence>
<accession>P0DQU0</accession>
<name>DEF5_OLIMR</name>
<sequence>MKVIALFFLFAFIFCTLEVAIVEAGFGCPLNQGACHRHCLSIRRRGGYCSGFFKQTCTCYRN</sequence>
<keyword id="KW-0044">Antibiotic</keyword>
<keyword id="KW-0929">Antimicrobial</keyword>
<keyword id="KW-1221">Calcium-activated potassium channel impairing toxin</keyword>
<keyword id="KW-0211">Defensin</keyword>
<keyword id="KW-1015">Disulfide bond</keyword>
<keyword id="KW-0391">Immunity</keyword>
<keyword id="KW-0399">Innate immunity</keyword>
<keyword id="KW-0872">Ion channel impairing toxin</keyword>
<keyword id="KW-0632">Potassium channel impairing toxin</keyword>
<keyword id="KW-0964">Secreted</keyword>
<keyword id="KW-0732">Signal</keyword>
<keyword id="KW-0800">Toxin</keyword>
<keyword id="KW-1220">Voltage-gated potassium channel impairing toxin</keyword>
<organism>
    <name type="scientific">Olivierus martensii</name>
    <name type="common">Manchurian scorpion</name>
    <name type="synonym">Mesobuthus martensii</name>
    <dbReference type="NCBI Taxonomy" id="34649"/>
    <lineage>
        <taxon>Eukaryota</taxon>
        <taxon>Metazoa</taxon>
        <taxon>Ecdysozoa</taxon>
        <taxon>Arthropoda</taxon>
        <taxon>Chelicerata</taxon>
        <taxon>Arachnida</taxon>
        <taxon>Scorpiones</taxon>
        <taxon>Buthida</taxon>
        <taxon>Buthoidea</taxon>
        <taxon>Buthidae</taxon>
        <taxon>Olivierus</taxon>
    </lineage>
</organism>
<protein>
    <recommendedName>
        <fullName evidence="5 6">Defensin BmKDfsin5</fullName>
    </recommendedName>
</protein>